<gene>
    <name evidence="1" type="primary">ureF</name>
    <name type="ordered locus">PMT9312_0831</name>
</gene>
<proteinExistence type="inferred from homology"/>
<dbReference type="EMBL" id="CP000111">
    <property type="protein sequence ID" value="ABB49891.1"/>
    <property type="molecule type" value="Genomic_DNA"/>
</dbReference>
<dbReference type="RefSeq" id="WP_011376386.1">
    <property type="nucleotide sequence ID" value="NC_007577.1"/>
</dbReference>
<dbReference type="SMR" id="Q31B54"/>
<dbReference type="STRING" id="74546.PMT9312_0831"/>
<dbReference type="KEGG" id="pmi:PMT9312_0831"/>
<dbReference type="eggNOG" id="COG0830">
    <property type="taxonomic scope" value="Bacteria"/>
</dbReference>
<dbReference type="HOGENOM" id="CLU_049215_2_1_3"/>
<dbReference type="OrthoDB" id="9798772at2"/>
<dbReference type="Proteomes" id="UP000002715">
    <property type="component" value="Chromosome"/>
</dbReference>
<dbReference type="GO" id="GO:0005737">
    <property type="term" value="C:cytoplasm"/>
    <property type="evidence" value="ECO:0007669"/>
    <property type="project" value="UniProtKB-SubCell"/>
</dbReference>
<dbReference type="GO" id="GO:0016151">
    <property type="term" value="F:nickel cation binding"/>
    <property type="evidence" value="ECO:0007669"/>
    <property type="project" value="UniProtKB-UniRule"/>
</dbReference>
<dbReference type="Gene3D" id="1.10.4190.10">
    <property type="entry name" value="Urease accessory protein UreF"/>
    <property type="match status" value="1"/>
</dbReference>
<dbReference type="HAMAP" id="MF_01385">
    <property type="entry name" value="UreF"/>
    <property type="match status" value="1"/>
</dbReference>
<dbReference type="InterPro" id="IPR002639">
    <property type="entry name" value="UreF"/>
</dbReference>
<dbReference type="InterPro" id="IPR038277">
    <property type="entry name" value="UreF_sf"/>
</dbReference>
<dbReference type="PANTHER" id="PTHR33620">
    <property type="entry name" value="UREASE ACCESSORY PROTEIN F"/>
    <property type="match status" value="1"/>
</dbReference>
<dbReference type="PANTHER" id="PTHR33620:SF1">
    <property type="entry name" value="UREASE ACCESSORY PROTEIN F"/>
    <property type="match status" value="1"/>
</dbReference>
<dbReference type="Pfam" id="PF01730">
    <property type="entry name" value="UreF"/>
    <property type="match status" value="1"/>
</dbReference>
<dbReference type="PIRSF" id="PIRSF009467">
    <property type="entry name" value="Ureas_acces_UreF"/>
    <property type="match status" value="1"/>
</dbReference>
<reference key="1">
    <citation type="journal article" date="2006" name="Science">
        <title>Genomic islands and the ecology and evolution of Prochlorococcus.</title>
        <authorList>
            <person name="Coleman M.L."/>
            <person name="Sullivan M.B."/>
            <person name="Martiny A.C."/>
            <person name="Steglich C."/>
            <person name="Barry K."/>
            <person name="Delong E.F."/>
            <person name="Chisholm S.W."/>
        </authorList>
    </citation>
    <scope>NUCLEOTIDE SEQUENCE [LARGE SCALE GENOMIC DNA]</scope>
    <source>
        <strain>MIT 9312</strain>
    </source>
</reference>
<name>UREF_PROM9</name>
<evidence type="ECO:0000255" key="1">
    <source>
        <dbReference type="HAMAP-Rule" id="MF_01385"/>
    </source>
</evidence>
<organism>
    <name type="scientific">Prochlorococcus marinus (strain MIT 9312)</name>
    <dbReference type="NCBI Taxonomy" id="74546"/>
    <lineage>
        <taxon>Bacteria</taxon>
        <taxon>Bacillati</taxon>
        <taxon>Cyanobacteriota</taxon>
        <taxon>Cyanophyceae</taxon>
        <taxon>Synechococcales</taxon>
        <taxon>Prochlorococcaceae</taxon>
        <taxon>Prochlorococcus</taxon>
    </lineage>
</organism>
<comment type="function">
    <text evidence="1">Required for maturation of urease via the functional incorporation of the urease nickel metallocenter.</text>
</comment>
<comment type="subunit">
    <text evidence="1">UreD, UreF and UreG form a complex that acts as a GTP-hydrolysis-dependent molecular chaperone, activating the urease apoprotein by helping to assemble the nickel containing metallocenter of UreC. The UreE protein probably delivers the nickel.</text>
</comment>
<comment type="subcellular location">
    <subcellularLocation>
        <location evidence="1">Cytoplasm</location>
    </subcellularLocation>
</comment>
<comment type="similarity">
    <text evidence="1">Belongs to the UreF family.</text>
</comment>
<accession>Q31B54</accession>
<keyword id="KW-0143">Chaperone</keyword>
<keyword id="KW-0963">Cytoplasm</keyword>
<keyword id="KW-0996">Nickel insertion</keyword>
<sequence>MTKSHLLKYLLTSPNLPVGGFCYSEGMESYLHNKNLNDSNSVKELIISELKIGQIRLDAKLLLDFFDIFNEINDGKNAKSNLQKLLSLNKWILSSKDSIEMREQQTQMAKSLFDLTKEFGFEYLYENNKKSSWPLAWSWACFCFEITKIEMVENFFYAWSANQLSAALRIIPIGSTKTQLIQRDLLAIISKVSKEIMDKQIDDIYFGNVGLAMAQQNHNDLYTKLFRN</sequence>
<feature type="chain" id="PRO_1000145130" description="Urease accessory protein UreF">
    <location>
        <begin position="1"/>
        <end position="228"/>
    </location>
</feature>
<protein>
    <recommendedName>
        <fullName evidence="1">Urease accessory protein UreF</fullName>
    </recommendedName>
</protein>